<comment type="function">
    <text evidence="1">Part of the ABC transporter complex MetNIQ involved in methionine import. Responsible for energy coupling to the transport system.</text>
</comment>
<comment type="catalytic activity">
    <reaction evidence="1">
        <text>L-methionine(out) + ATP + H2O = L-methionine(in) + ADP + phosphate + H(+)</text>
        <dbReference type="Rhea" id="RHEA:29779"/>
        <dbReference type="ChEBI" id="CHEBI:15377"/>
        <dbReference type="ChEBI" id="CHEBI:15378"/>
        <dbReference type="ChEBI" id="CHEBI:30616"/>
        <dbReference type="ChEBI" id="CHEBI:43474"/>
        <dbReference type="ChEBI" id="CHEBI:57844"/>
        <dbReference type="ChEBI" id="CHEBI:456216"/>
        <dbReference type="EC" id="7.4.2.11"/>
    </reaction>
</comment>
<comment type="catalytic activity">
    <reaction evidence="1">
        <text>D-methionine(out) + ATP + H2O = D-methionine(in) + ADP + phosphate + H(+)</text>
        <dbReference type="Rhea" id="RHEA:29767"/>
        <dbReference type="ChEBI" id="CHEBI:15377"/>
        <dbReference type="ChEBI" id="CHEBI:15378"/>
        <dbReference type="ChEBI" id="CHEBI:30616"/>
        <dbReference type="ChEBI" id="CHEBI:43474"/>
        <dbReference type="ChEBI" id="CHEBI:57932"/>
        <dbReference type="ChEBI" id="CHEBI:456216"/>
        <dbReference type="EC" id="7.4.2.11"/>
    </reaction>
</comment>
<comment type="subunit">
    <text evidence="1">The complex is composed of two ATP-binding proteins (MetN), two transmembrane proteins (MetI) and a solute-binding protein (MetQ).</text>
</comment>
<comment type="subcellular location">
    <subcellularLocation>
        <location evidence="1">Cell inner membrane</location>
        <topology evidence="1">Peripheral membrane protein</topology>
    </subcellularLocation>
</comment>
<comment type="similarity">
    <text evidence="1">Belongs to the ABC transporter superfamily. Methionine importer (TC 3.A.1.24) family.</text>
</comment>
<reference key="1">
    <citation type="journal article" date="2006" name="J. Bacteriol.">
        <title>Chromosome rearrangement and diversification of Francisella tularensis revealed by the type B (OSU18) genome sequence.</title>
        <authorList>
            <person name="Petrosino J.F."/>
            <person name="Xiang Q."/>
            <person name="Karpathy S.E."/>
            <person name="Jiang H."/>
            <person name="Yerrapragada S."/>
            <person name="Liu Y."/>
            <person name="Gioia J."/>
            <person name="Hemphill L."/>
            <person name="Gonzalez A."/>
            <person name="Raghavan T.M."/>
            <person name="Uzman A."/>
            <person name="Fox G.E."/>
            <person name="Highlander S."/>
            <person name="Reichard M."/>
            <person name="Morton R.J."/>
            <person name="Clinkenbeard K.D."/>
            <person name="Weinstock G.M."/>
        </authorList>
    </citation>
    <scope>NUCLEOTIDE SEQUENCE [LARGE SCALE GENOMIC DNA]</scope>
    <source>
        <strain>OSU18</strain>
    </source>
</reference>
<organism>
    <name type="scientific">Francisella tularensis subsp. holarctica (strain OSU18)</name>
    <dbReference type="NCBI Taxonomy" id="393011"/>
    <lineage>
        <taxon>Bacteria</taxon>
        <taxon>Pseudomonadati</taxon>
        <taxon>Pseudomonadota</taxon>
        <taxon>Gammaproteobacteria</taxon>
        <taxon>Thiotrichales</taxon>
        <taxon>Francisellaceae</taxon>
        <taxon>Francisella</taxon>
    </lineage>
</organism>
<dbReference type="EC" id="7.4.2.11" evidence="1"/>
<dbReference type="EMBL" id="CP000437">
    <property type="protein sequence ID" value="ABI82755.1"/>
    <property type="molecule type" value="Genomic_DNA"/>
</dbReference>
<dbReference type="RefSeq" id="WP_003015426.1">
    <property type="nucleotide sequence ID" value="NC_017463.1"/>
</dbReference>
<dbReference type="SMR" id="Q0BMC9"/>
<dbReference type="KEGG" id="fth:FTH_0827"/>
<dbReference type="GO" id="GO:0005886">
    <property type="term" value="C:plasma membrane"/>
    <property type="evidence" value="ECO:0007669"/>
    <property type="project" value="UniProtKB-SubCell"/>
</dbReference>
<dbReference type="GO" id="GO:0033232">
    <property type="term" value="F:ABC-type D-methionine transporter activity"/>
    <property type="evidence" value="ECO:0007669"/>
    <property type="project" value="UniProtKB-EC"/>
</dbReference>
<dbReference type="GO" id="GO:0005524">
    <property type="term" value="F:ATP binding"/>
    <property type="evidence" value="ECO:0007669"/>
    <property type="project" value="UniProtKB-KW"/>
</dbReference>
<dbReference type="GO" id="GO:0016887">
    <property type="term" value="F:ATP hydrolysis activity"/>
    <property type="evidence" value="ECO:0007669"/>
    <property type="project" value="InterPro"/>
</dbReference>
<dbReference type="CDD" id="cd03258">
    <property type="entry name" value="ABC_MetN_methionine_transporter"/>
    <property type="match status" value="1"/>
</dbReference>
<dbReference type="FunFam" id="3.40.50.300:FF:000056">
    <property type="entry name" value="Cell division ATP-binding protein FtsE"/>
    <property type="match status" value="1"/>
</dbReference>
<dbReference type="Gene3D" id="3.30.70.260">
    <property type="match status" value="1"/>
</dbReference>
<dbReference type="Gene3D" id="3.40.50.300">
    <property type="entry name" value="P-loop containing nucleotide triphosphate hydrolases"/>
    <property type="match status" value="1"/>
</dbReference>
<dbReference type="InterPro" id="IPR003593">
    <property type="entry name" value="AAA+_ATPase"/>
</dbReference>
<dbReference type="InterPro" id="IPR003439">
    <property type="entry name" value="ABC_transporter-like_ATP-bd"/>
</dbReference>
<dbReference type="InterPro" id="IPR017871">
    <property type="entry name" value="ABC_transporter-like_CS"/>
</dbReference>
<dbReference type="InterPro" id="IPR045865">
    <property type="entry name" value="ACT-like_dom_sf"/>
</dbReference>
<dbReference type="InterPro" id="IPR041701">
    <property type="entry name" value="MetN_ABC"/>
</dbReference>
<dbReference type="InterPro" id="IPR050086">
    <property type="entry name" value="MetN_ABC_transporter-like"/>
</dbReference>
<dbReference type="InterPro" id="IPR018449">
    <property type="entry name" value="NIL_domain"/>
</dbReference>
<dbReference type="InterPro" id="IPR027417">
    <property type="entry name" value="P-loop_NTPase"/>
</dbReference>
<dbReference type="PANTHER" id="PTHR43166">
    <property type="entry name" value="AMINO ACID IMPORT ATP-BINDING PROTEIN"/>
    <property type="match status" value="1"/>
</dbReference>
<dbReference type="PANTHER" id="PTHR43166:SF30">
    <property type="entry name" value="METHIONINE IMPORT ATP-BINDING PROTEIN METN"/>
    <property type="match status" value="1"/>
</dbReference>
<dbReference type="Pfam" id="PF00005">
    <property type="entry name" value="ABC_tran"/>
    <property type="match status" value="1"/>
</dbReference>
<dbReference type="Pfam" id="PF09383">
    <property type="entry name" value="NIL"/>
    <property type="match status" value="1"/>
</dbReference>
<dbReference type="SMART" id="SM00382">
    <property type="entry name" value="AAA"/>
    <property type="match status" value="1"/>
</dbReference>
<dbReference type="SMART" id="SM00930">
    <property type="entry name" value="NIL"/>
    <property type="match status" value="1"/>
</dbReference>
<dbReference type="SUPFAM" id="SSF55021">
    <property type="entry name" value="ACT-like"/>
    <property type="match status" value="1"/>
</dbReference>
<dbReference type="SUPFAM" id="SSF52540">
    <property type="entry name" value="P-loop containing nucleoside triphosphate hydrolases"/>
    <property type="match status" value="1"/>
</dbReference>
<dbReference type="PROSITE" id="PS00211">
    <property type="entry name" value="ABC_TRANSPORTER_1"/>
    <property type="match status" value="1"/>
</dbReference>
<dbReference type="PROSITE" id="PS50893">
    <property type="entry name" value="ABC_TRANSPORTER_2"/>
    <property type="match status" value="1"/>
</dbReference>
<dbReference type="PROSITE" id="PS51264">
    <property type="entry name" value="METN"/>
    <property type="match status" value="1"/>
</dbReference>
<evidence type="ECO:0000255" key="1">
    <source>
        <dbReference type="HAMAP-Rule" id="MF_01719"/>
    </source>
</evidence>
<accession>Q0BMC9</accession>
<keyword id="KW-0029">Amino-acid transport</keyword>
<keyword id="KW-0067">ATP-binding</keyword>
<keyword id="KW-0997">Cell inner membrane</keyword>
<keyword id="KW-1003">Cell membrane</keyword>
<keyword id="KW-0472">Membrane</keyword>
<keyword id="KW-0547">Nucleotide-binding</keyword>
<keyword id="KW-1278">Translocase</keyword>
<keyword id="KW-0813">Transport</keyword>
<gene>
    <name evidence="1" type="primary">metN</name>
    <name type="ordered locus">FTH_0827</name>
</gene>
<sequence>MIQIKNLKKEYRTNNTSNLVLDNINLEIKQGEIFGIIGHSGAGKSSLLRCLNLLEQPTDGSIFIADENITKKNSKQLREFRKKVAMIFQHFNLLSSRNVFENIALPLEIQGIPKSEIKKRVFELLDLVELPNKANAYPQELSGGQKQKVAIARALALNPLVLLSDEATSALDPTSTKQILALLKRLNKELGLTIVLITHEMDVVRKICDRVAIIDKGRIAEMGKTLDVFLNPQAPVTRSFVETSIHTKVPDFIAKKLQDNPYSYDNTYPVVQLTFYGDKGKMPIIAEISRQFNATASIIQANIETIQDQIVGIAICHITGERQDWENALRFLSNQDVNLKVLGYATADNI</sequence>
<feature type="chain" id="PRO_0000270301" description="Methionine import ATP-binding protein MetN">
    <location>
        <begin position="1"/>
        <end position="350"/>
    </location>
</feature>
<feature type="domain" description="ABC transporter" evidence="1">
    <location>
        <begin position="2"/>
        <end position="241"/>
    </location>
</feature>
<feature type="binding site" evidence="1">
    <location>
        <begin position="38"/>
        <end position="45"/>
    </location>
    <ligand>
        <name>ATP</name>
        <dbReference type="ChEBI" id="CHEBI:30616"/>
    </ligand>
</feature>
<name>METN_FRATO</name>
<proteinExistence type="inferred from homology"/>
<protein>
    <recommendedName>
        <fullName evidence="1">Methionine import ATP-binding protein MetN</fullName>
        <ecNumber evidence="1">7.4.2.11</ecNumber>
    </recommendedName>
</protein>